<dbReference type="EC" id="2.7.1.170" evidence="1"/>
<dbReference type="EMBL" id="CP000647">
    <property type="protein sequence ID" value="ABR77409.1"/>
    <property type="molecule type" value="Genomic_DNA"/>
</dbReference>
<dbReference type="RefSeq" id="WP_004143831.1">
    <property type="nucleotide sequence ID" value="NC_009648.1"/>
</dbReference>
<dbReference type="SMR" id="A6T9Y8"/>
<dbReference type="STRING" id="272620.KPN_01978"/>
<dbReference type="PaxDb" id="272620-KPN_01978"/>
<dbReference type="EnsemblBacteria" id="ABR77409">
    <property type="protein sequence ID" value="ABR77409"/>
    <property type="gene ID" value="KPN_01978"/>
</dbReference>
<dbReference type="KEGG" id="kpn:KPN_01978"/>
<dbReference type="HOGENOM" id="CLU_038782_0_0_6"/>
<dbReference type="UniPathway" id="UPA00343"/>
<dbReference type="UniPathway" id="UPA00544"/>
<dbReference type="Proteomes" id="UP000000265">
    <property type="component" value="Chromosome"/>
</dbReference>
<dbReference type="GO" id="GO:0005524">
    <property type="term" value="F:ATP binding"/>
    <property type="evidence" value="ECO:0007669"/>
    <property type="project" value="UniProtKB-UniRule"/>
</dbReference>
<dbReference type="GO" id="GO:0016301">
    <property type="term" value="F:kinase activity"/>
    <property type="evidence" value="ECO:0007669"/>
    <property type="project" value="UniProtKB-KW"/>
</dbReference>
<dbReference type="GO" id="GO:0016773">
    <property type="term" value="F:phosphotransferase activity, alcohol group as acceptor"/>
    <property type="evidence" value="ECO:0007669"/>
    <property type="project" value="UniProtKB-UniRule"/>
</dbReference>
<dbReference type="GO" id="GO:0097175">
    <property type="term" value="P:1,6-anhydro-N-acetyl-beta-muramic acid catabolic process"/>
    <property type="evidence" value="ECO:0007669"/>
    <property type="project" value="UniProtKB-UniRule"/>
</dbReference>
<dbReference type="GO" id="GO:0006040">
    <property type="term" value="P:amino sugar metabolic process"/>
    <property type="evidence" value="ECO:0007669"/>
    <property type="project" value="InterPro"/>
</dbReference>
<dbReference type="GO" id="GO:0009254">
    <property type="term" value="P:peptidoglycan turnover"/>
    <property type="evidence" value="ECO:0007669"/>
    <property type="project" value="UniProtKB-UniRule"/>
</dbReference>
<dbReference type="CDD" id="cd24050">
    <property type="entry name" value="ASKHA_NBD_ANMK"/>
    <property type="match status" value="1"/>
</dbReference>
<dbReference type="Gene3D" id="3.30.420.40">
    <property type="match status" value="2"/>
</dbReference>
<dbReference type="HAMAP" id="MF_01270">
    <property type="entry name" value="AnhMurNAc_kinase"/>
    <property type="match status" value="1"/>
</dbReference>
<dbReference type="InterPro" id="IPR005338">
    <property type="entry name" value="Anhydro_N_Ac-Mur_kinase"/>
</dbReference>
<dbReference type="InterPro" id="IPR043129">
    <property type="entry name" value="ATPase_NBD"/>
</dbReference>
<dbReference type="NCBIfam" id="NF007138">
    <property type="entry name" value="PRK09585.1-1"/>
    <property type="match status" value="1"/>
</dbReference>
<dbReference type="NCBIfam" id="NF007139">
    <property type="entry name" value="PRK09585.1-3"/>
    <property type="match status" value="1"/>
</dbReference>
<dbReference type="NCBIfam" id="NF007148">
    <property type="entry name" value="PRK09585.3-2"/>
    <property type="match status" value="1"/>
</dbReference>
<dbReference type="PANTHER" id="PTHR30605">
    <property type="entry name" value="ANHYDRO-N-ACETYLMURAMIC ACID KINASE"/>
    <property type="match status" value="1"/>
</dbReference>
<dbReference type="PANTHER" id="PTHR30605:SF0">
    <property type="entry name" value="ANHYDRO-N-ACETYLMURAMIC ACID KINASE"/>
    <property type="match status" value="1"/>
</dbReference>
<dbReference type="Pfam" id="PF03702">
    <property type="entry name" value="AnmK"/>
    <property type="match status" value="1"/>
</dbReference>
<dbReference type="SUPFAM" id="SSF53067">
    <property type="entry name" value="Actin-like ATPase domain"/>
    <property type="match status" value="1"/>
</dbReference>
<keyword id="KW-0067">ATP-binding</keyword>
<keyword id="KW-0119">Carbohydrate metabolism</keyword>
<keyword id="KW-0418">Kinase</keyword>
<keyword id="KW-0547">Nucleotide-binding</keyword>
<keyword id="KW-0808">Transferase</keyword>
<gene>
    <name evidence="1" type="primary">anmK</name>
    <name type="ordered locus">KPN78578_19480</name>
    <name type="ORF">KPN_01978</name>
</gene>
<feature type="chain" id="PRO_1000067351" description="Anhydro-N-acetylmuramic acid kinase">
    <location>
        <begin position="1"/>
        <end position="374"/>
    </location>
</feature>
<feature type="binding site" evidence="1">
    <location>
        <begin position="12"/>
        <end position="19"/>
    </location>
    <ligand>
        <name>ATP</name>
        <dbReference type="ChEBI" id="CHEBI:30616"/>
    </ligand>
</feature>
<protein>
    <recommendedName>
        <fullName evidence="1">Anhydro-N-acetylmuramic acid kinase</fullName>
        <ecNumber evidence="1">2.7.1.170</ecNumber>
    </recommendedName>
    <alternativeName>
        <fullName evidence="1">AnhMurNAc kinase</fullName>
    </alternativeName>
</protein>
<organism>
    <name type="scientific">Klebsiella pneumoniae subsp. pneumoniae (strain ATCC 700721 / MGH 78578)</name>
    <dbReference type="NCBI Taxonomy" id="272620"/>
    <lineage>
        <taxon>Bacteria</taxon>
        <taxon>Pseudomonadati</taxon>
        <taxon>Pseudomonadota</taxon>
        <taxon>Gammaproteobacteria</taxon>
        <taxon>Enterobacterales</taxon>
        <taxon>Enterobacteriaceae</taxon>
        <taxon>Klebsiella/Raoultella group</taxon>
        <taxon>Klebsiella</taxon>
        <taxon>Klebsiella pneumoniae complex</taxon>
    </lineage>
</organism>
<comment type="function">
    <text evidence="1">Catalyzes the specific phosphorylation of 1,6-anhydro-N-acetylmuramic acid (anhMurNAc) with the simultaneous cleavage of the 1,6-anhydro ring, generating MurNAc-6-P. Is required for the utilization of anhMurNAc either imported from the medium or derived from its own cell wall murein, and thus plays a role in cell wall recycling.</text>
</comment>
<comment type="catalytic activity">
    <reaction evidence="1">
        <text>1,6-anhydro-N-acetyl-beta-muramate + ATP + H2O = N-acetyl-D-muramate 6-phosphate + ADP + H(+)</text>
        <dbReference type="Rhea" id="RHEA:24952"/>
        <dbReference type="ChEBI" id="CHEBI:15377"/>
        <dbReference type="ChEBI" id="CHEBI:15378"/>
        <dbReference type="ChEBI" id="CHEBI:30616"/>
        <dbReference type="ChEBI" id="CHEBI:58690"/>
        <dbReference type="ChEBI" id="CHEBI:58722"/>
        <dbReference type="ChEBI" id="CHEBI:456216"/>
        <dbReference type="EC" id="2.7.1.170"/>
    </reaction>
</comment>
<comment type="pathway">
    <text evidence="1">Amino-sugar metabolism; 1,6-anhydro-N-acetylmuramate degradation.</text>
</comment>
<comment type="pathway">
    <text evidence="1">Cell wall biogenesis; peptidoglycan recycling.</text>
</comment>
<comment type="similarity">
    <text evidence="1">Belongs to the anhydro-N-acetylmuramic acid kinase family.</text>
</comment>
<reference key="1">
    <citation type="submission" date="2006-09" db="EMBL/GenBank/DDBJ databases">
        <authorList>
            <consortium name="The Klebsiella pneumonia Genome Sequencing Project"/>
            <person name="McClelland M."/>
            <person name="Sanderson E.K."/>
            <person name="Spieth J."/>
            <person name="Clifton W.S."/>
            <person name="Latreille P."/>
            <person name="Sabo A."/>
            <person name="Pepin K."/>
            <person name="Bhonagiri V."/>
            <person name="Porwollik S."/>
            <person name="Ali J."/>
            <person name="Wilson R.K."/>
        </authorList>
    </citation>
    <scope>NUCLEOTIDE SEQUENCE [LARGE SCALE GENOMIC DNA]</scope>
    <source>
        <strain>ATCC 700721 / MGH 78578</strain>
    </source>
</reference>
<sequence length="374" mass="40065">MRSGRFIGVMSGTSLDGIDVVLATITENMVAQQASLTWPIPHAIKEEILAICQGQSLTLSQLGRLDTRLGRLFADAVLALMRQESLKPTDVIAIGCHGQTVWHEPQGEAPHTLQIGDNNQIAAHTGITVVGDFRRRDMALGGQGAPLVPAFHHALLAHPVERRMVLNIGGIANVSLLAPGQPVRGYDTGPGNMLLDAWIWRQKGKPYDKDAQWASEGKVLLPLLQDMLSDPWFALPAPKSTGREYFNYGWLEQHMARYPGLRGEDVQATLAELTAVTISEQVLLSGGCERLLVCGGGARNPLLMARLAALLPGTEVSTTDEAGISGDDMEALAFAWLAWRTLAGLPGNLPSVTGASEASVLGAIFPANPPQNRS</sequence>
<proteinExistence type="inferred from homology"/>
<accession>A6T9Y8</accession>
<evidence type="ECO:0000255" key="1">
    <source>
        <dbReference type="HAMAP-Rule" id="MF_01270"/>
    </source>
</evidence>
<name>ANMK_KLEP7</name>